<sequence length="105" mass="11254">MANRIKKGDQVVINTGKDKGKQGEVLRVDGDRVIVSNANLIKRHTKPNPQAGVAGGVVEREASIHISNVNIVNPATGKGERVGFKVLEDGRKLRVFRSSGEALDA</sequence>
<protein>
    <recommendedName>
        <fullName evidence="1">Large ribosomal subunit protein uL24</fullName>
    </recommendedName>
    <alternativeName>
        <fullName evidence="2">50S ribosomal protein L24</fullName>
    </alternativeName>
</protein>
<feature type="chain" id="PRO_1000142055" description="Large ribosomal subunit protein uL24">
    <location>
        <begin position="1"/>
        <end position="105"/>
    </location>
</feature>
<comment type="function">
    <text evidence="1">One of two assembly initiator proteins, it binds directly to the 5'-end of the 23S rRNA, where it nucleates assembly of the 50S subunit.</text>
</comment>
<comment type="function">
    <text evidence="1">One of the proteins that surrounds the polypeptide exit tunnel on the outside of the subunit.</text>
</comment>
<comment type="subunit">
    <text evidence="1">Part of the 50S ribosomal subunit.</text>
</comment>
<comment type="similarity">
    <text evidence="1">Belongs to the universal ribosomal protein uL24 family.</text>
</comment>
<accession>B2SQS1</accession>
<gene>
    <name evidence="1" type="primary">rplX</name>
    <name type="ordered locus">PXO_04510</name>
</gene>
<keyword id="KW-0687">Ribonucleoprotein</keyword>
<keyword id="KW-0689">Ribosomal protein</keyword>
<keyword id="KW-0694">RNA-binding</keyword>
<keyword id="KW-0699">rRNA-binding</keyword>
<proteinExistence type="inferred from homology"/>
<reference key="1">
    <citation type="journal article" date="2008" name="BMC Genomics">
        <title>Genome sequence and rapid evolution of the rice pathogen Xanthomonas oryzae pv. oryzae PXO99A.</title>
        <authorList>
            <person name="Salzberg S.L."/>
            <person name="Sommer D.D."/>
            <person name="Schatz M.C."/>
            <person name="Phillippy A.M."/>
            <person name="Rabinowicz P.D."/>
            <person name="Tsuge S."/>
            <person name="Furutani A."/>
            <person name="Ochiai H."/>
            <person name="Delcher A.L."/>
            <person name="Kelley D."/>
            <person name="Madupu R."/>
            <person name="Puiu D."/>
            <person name="Radune D."/>
            <person name="Shumway M."/>
            <person name="Trapnell C."/>
            <person name="Aparna G."/>
            <person name="Jha G."/>
            <person name="Pandey A."/>
            <person name="Patil P.B."/>
            <person name="Ishihara H."/>
            <person name="Meyer D.F."/>
            <person name="Szurek B."/>
            <person name="Verdier V."/>
            <person name="Koebnik R."/>
            <person name="Dow J.M."/>
            <person name="Ryan R.P."/>
            <person name="Hirata H."/>
            <person name="Tsuyumu S."/>
            <person name="Won Lee S."/>
            <person name="Seo Y.-S."/>
            <person name="Sriariyanum M."/>
            <person name="Ronald P.C."/>
            <person name="Sonti R.V."/>
            <person name="Van Sluys M.-A."/>
            <person name="Leach J.E."/>
            <person name="White F.F."/>
            <person name="Bogdanove A.J."/>
        </authorList>
    </citation>
    <scope>NUCLEOTIDE SEQUENCE [LARGE SCALE GENOMIC DNA]</scope>
    <source>
        <strain>PXO99A</strain>
    </source>
</reference>
<evidence type="ECO:0000255" key="1">
    <source>
        <dbReference type="HAMAP-Rule" id="MF_01326"/>
    </source>
</evidence>
<evidence type="ECO:0000305" key="2"/>
<name>RL24_XANOP</name>
<dbReference type="EMBL" id="CP000967">
    <property type="protein sequence ID" value="ACD57898.1"/>
    <property type="molecule type" value="Genomic_DNA"/>
</dbReference>
<dbReference type="RefSeq" id="WP_012444297.1">
    <property type="nucleotide sequence ID" value="NC_010717.2"/>
</dbReference>
<dbReference type="SMR" id="B2SQS1"/>
<dbReference type="KEGG" id="xop:PXO_04510"/>
<dbReference type="eggNOG" id="COG0198">
    <property type="taxonomic scope" value="Bacteria"/>
</dbReference>
<dbReference type="HOGENOM" id="CLU_093315_2_2_6"/>
<dbReference type="Proteomes" id="UP000001740">
    <property type="component" value="Chromosome"/>
</dbReference>
<dbReference type="GO" id="GO:1990904">
    <property type="term" value="C:ribonucleoprotein complex"/>
    <property type="evidence" value="ECO:0007669"/>
    <property type="project" value="UniProtKB-KW"/>
</dbReference>
<dbReference type="GO" id="GO:0005840">
    <property type="term" value="C:ribosome"/>
    <property type="evidence" value="ECO:0007669"/>
    <property type="project" value="UniProtKB-KW"/>
</dbReference>
<dbReference type="GO" id="GO:0019843">
    <property type="term" value="F:rRNA binding"/>
    <property type="evidence" value="ECO:0007669"/>
    <property type="project" value="UniProtKB-UniRule"/>
</dbReference>
<dbReference type="GO" id="GO:0003735">
    <property type="term" value="F:structural constituent of ribosome"/>
    <property type="evidence" value="ECO:0007669"/>
    <property type="project" value="InterPro"/>
</dbReference>
<dbReference type="GO" id="GO:0006412">
    <property type="term" value="P:translation"/>
    <property type="evidence" value="ECO:0007669"/>
    <property type="project" value="UniProtKB-UniRule"/>
</dbReference>
<dbReference type="CDD" id="cd06089">
    <property type="entry name" value="KOW_RPL26"/>
    <property type="match status" value="1"/>
</dbReference>
<dbReference type="FunFam" id="2.30.30.30:FF:000004">
    <property type="entry name" value="50S ribosomal protein L24"/>
    <property type="match status" value="1"/>
</dbReference>
<dbReference type="Gene3D" id="2.30.30.30">
    <property type="match status" value="1"/>
</dbReference>
<dbReference type="HAMAP" id="MF_01326_B">
    <property type="entry name" value="Ribosomal_uL24_B"/>
    <property type="match status" value="1"/>
</dbReference>
<dbReference type="InterPro" id="IPR005824">
    <property type="entry name" value="KOW"/>
</dbReference>
<dbReference type="InterPro" id="IPR014722">
    <property type="entry name" value="Rib_uL2_dom2"/>
</dbReference>
<dbReference type="InterPro" id="IPR003256">
    <property type="entry name" value="Ribosomal_uL24"/>
</dbReference>
<dbReference type="InterPro" id="IPR041988">
    <property type="entry name" value="Ribosomal_uL24_KOW"/>
</dbReference>
<dbReference type="InterPro" id="IPR008991">
    <property type="entry name" value="Translation_prot_SH3-like_sf"/>
</dbReference>
<dbReference type="NCBIfam" id="TIGR01079">
    <property type="entry name" value="rplX_bact"/>
    <property type="match status" value="1"/>
</dbReference>
<dbReference type="PANTHER" id="PTHR12903">
    <property type="entry name" value="MITOCHONDRIAL RIBOSOMAL PROTEIN L24"/>
    <property type="match status" value="1"/>
</dbReference>
<dbReference type="Pfam" id="PF00467">
    <property type="entry name" value="KOW"/>
    <property type="match status" value="1"/>
</dbReference>
<dbReference type="Pfam" id="PF17136">
    <property type="entry name" value="ribosomal_L24"/>
    <property type="match status" value="1"/>
</dbReference>
<dbReference type="SMART" id="SM00739">
    <property type="entry name" value="KOW"/>
    <property type="match status" value="1"/>
</dbReference>
<dbReference type="SUPFAM" id="SSF50104">
    <property type="entry name" value="Translation proteins SH3-like domain"/>
    <property type="match status" value="1"/>
</dbReference>
<organism>
    <name type="scientific">Xanthomonas oryzae pv. oryzae (strain PXO99A)</name>
    <dbReference type="NCBI Taxonomy" id="360094"/>
    <lineage>
        <taxon>Bacteria</taxon>
        <taxon>Pseudomonadati</taxon>
        <taxon>Pseudomonadota</taxon>
        <taxon>Gammaproteobacteria</taxon>
        <taxon>Lysobacterales</taxon>
        <taxon>Lysobacteraceae</taxon>
        <taxon>Xanthomonas</taxon>
    </lineage>
</organism>